<name>FP25_NPVAC</name>
<sequence>MDQFEQLINVSLLKSLIKTQIDENVSDNIKSMSEKLKRLEYDNLTDSVEIYGIHDSRLNNKKIRNYYLKKICALLDLNFKHVIESSFDKNHIVAKLCDATRAKEWQTKSRERRLKNFNLNINYDGPVKIFVAATAEQKLLLKKTRDALLPFYKYISICKNGVMVRRDEKSRVFIVKNEQNIEYLKANKYYAFHSDSVDNFESENDSEKMLQNLI</sequence>
<gene>
    <name type="primary">FP</name>
</gene>
<evidence type="ECO:0000269" key="1">
    <source>
    </source>
</evidence>
<evidence type="ECO:0000305" key="2"/>
<organism>
    <name type="scientific">Autographa californica nuclear polyhedrosis virus</name>
    <name type="common">AcMNPV</name>
    <dbReference type="NCBI Taxonomy" id="46015"/>
    <lineage>
        <taxon>Viruses</taxon>
        <taxon>Viruses incertae sedis</taxon>
        <taxon>Naldaviricetes</taxon>
        <taxon>Lefavirales</taxon>
        <taxon>Baculoviridae</taxon>
        <taxon>Alphabaculovirus</taxon>
        <taxon>Alphabaculovirus aucalifornicae</taxon>
    </lineage>
</organism>
<proteinExistence type="evidence at protein level"/>
<protein>
    <recommendedName>
        <fullName>Protein FP25</fullName>
    </recommendedName>
    <alternativeName>
        <fullName>25 kDa protein</fullName>
    </alternativeName>
</protein>
<keyword id="KW-1185">Reference proteome</keyword>
<comment type="subunit">
    <text evidence="1">Interacts with IE0.</text>
</comment>
<comment type="miscellaneous">
    <text>This protein is missing from baculovirus FP (few polyhedra) mutants.</text>
</comment>
<reference key="1">
    <citation type="journal article" date="1989" name="Virology">
        <title>Location and nucleotide sequence of the 25K protein missing from baculovirus few polyhedra (FP) mutants.</title>
        <authorList>
            <person name="Beames B."/>
            <person name="Summers M.D."/>
        </authorList>
    </citation>
    <scope>NUCLEOTIDE SEQUENCE [GENOMIC DNA]</scope>
    <source>
        <strain>E2</strain>
    </source>
</reference>
<reference key="2">
    <citation type="journal article" date="1989" name="Gene">
        <title>Transposon mutagenesis of baculoviruses: analysis of TFP3 lepidopteran transposon insertions at the FP locus of nuclear polyhedrosis viruses.</title>
        <authorList>
            <person name="Wang H.-H."/>
            <person name="Fraser M.J. Jr."/>
            <person name="Cary L.C."/>
        </authorList>
    </citation>
    <scope>NUCLEOTIDE SEQUENCE [GENOMIC DNA]</scope>
</reference>
<reference key="3">
    <citation type="journal article" date="1994" name="Virology">
        <title>The complete DNA sequence of Autographa californica nuclear polyhedrosis virus.</title>
        <authorList>
            <person name="Ayres M.D."/>
            <person name="Howard S.C."/>
            <person name="Kuzio J."/>
            <person name="Lopez-Ferber M."/>
            <person name="Possee R.D."/>
        </authorList>
    </citation>
    <scope>NUCLEOTIDE SEQUENCE [LARGE SCALE GENOMIC DNA]</scope>
    <source>
        <strain>C6</strain>
    </source>
</reference>
<reference key="4">
    <citation type="journal article" date="2007" name="J. Virol.">
        <title>Autographa californica multiple nucleopolyhedrovirus EXON0 (ORF141) is required for efficient egress of nucleocapsids from the nucleus.</title>
        <authorList>
            <person name="Fang M."/>
            <person name="Dai X."/>
            <person name="Theilmann D.A."/>
        </authorList>
    </citation>
    <scope>INTERACTION WITH PROTEIN IE0</scope>
</reference>
<feature type="chain" id="PRO_0000132870" description="Protein FP25">
    <location>
        <begin position="1"/>
        <end position="214"/>
    </location>
</feature>
<feature type="sequence conflict" description="In Ref. 1; AAA46679." evidence="2" ref="1">
    <location>
        <begin position="212"/>
        <end position="213"/>
    </location>
</feature>
<accession>P69037</accession>
<accession>P18350</accession>
<dbReference type="EMBL" id="M22537">
    <property type="protein sequence ID" value="AAA46679.1"/>
    <property type="molecule type" value="Genomic_DNA"/>
</dbReference>
<dbReference type="EMBL" id="L22858">
    <property type="protein sequence ID" value="AAA66691.1"/>
    <property type="molecule type" value="Genomic_DNA"/>
</dbReference>
<dbReference type="PIR" id="A31292">
    <property type="entry name" value="WMNV25"/>
</dbReference>
<dbReference type="PIR" id="F72857">
    <property type="entry name" value="F72857"/>
</dbReference>
<dbReference type="KEGG" id="vg:1403894"/>
<dbReference type="OrthoDB" id="15947at10239"/>
<dbReference type="Proteomes" id="UP000008292">
    <property type="component" value="Segment"/>
</dbReference>
<dbReference type="InterPro" id="IPR004941">
    <property type="entry name" value="FP_N"/>
</dbReference>
<dbReference type="Pfam" id="PF03258">
    <property type="entry name" value="Baculo_FP"/>
    <property type="match status" value="1"/>
</dbReference>
<dbReference type="Pfam" id="PF25298">
    <property type="entry name" value="Baculo_FP_2nd"/>
    <property type="match status" value="1"/>
</dbReference>
<organismHost>
    <name type="scientific">Lepidoptera</name>
    <name type="common">butterflies and moths</name>
    <dbReference type="NCBI Taxonomy" id="7088"/>
</organismHost>